<keyword id="KW-0997">Cell inner membrane</keyword>
<keyword id="KW-1003">Cell membrane</keyword>
<keyword id="KW-0472">Membrane</keyword>
<keyword id="KW-0520">NAD</keyword>
<keyword id="KW-0874">Quinone</keyword>
<keyword id="KW-1185">Reference proteome</keyword>
<keyword id="KW-1278">Translocase</keyword>
<keyword id="KW-0813">Transport</keyword>
<keyword id="KW-0830">Ubiquinone</keyword>
<proteinExistence type="inferred from homology"/>
<gene>
    <name evidence="1" type="primary">nuoC</name>
    <name type="ordered locus">RD1_3290</name>
</gene>
<reference key="1">
    <citation type="journal article" date="2007" name="J. Bacteriol.">
        <title>The complete genome sequence of Roseobacter denitrificans reveals a mixotrophic rather than photosynthetic metabolism.</title>
        <authorList>
            <person name="Swingley W.D."/>
            <person name="Sadekar S."/>
            <person name="Mastrian S.D."/>
            <person name="Matthies H.J."/>
            <person name="Hao J."/>
            <person name="Ramos H."/>
            <person name="Acharya C.R."/>
            <person name="Conrad A.L."/>
            <person name="Taylor H.L."/>
            <person name="Dejesa L.C."/>
            <person name="Shah M.K."/>
            <person name="O'Huallachain M.E."/>
            <person name="Lince M.T."/>
            <person name="Blankenship R.E."/>
            <person name="Beatty J.T."/>
            <person name="Touchman J.W."/>
        </authorList>
    </citation>
    <scope>NUCLEOTIDE SEQUENCE [LARGE SCALE GENOMIC DNA]</scope>
    <source>
        <strain>ATCC 33942 / OCh 114</strain>
    </source>
</reference>
<name>NUOC_ROSDO</name>
<comment type="function">
    <text evidence="1">NDH-1 shuttles electrons from NADH, via FMN and iron-sulfur (Fe-S) centers, to quinones in the respiratory chain. The immediate electron acceptor for the enzyme in this species is believed to be ubiquinone. Couples the redox reaction to proton translocation (for every two electrons transferred, four hydrogen ions are translocated across the cytoplasmic membrane), and thus conserves the redox energy in a proton gradient.</text>
</comment>
<comment type="catalytic activity">
    <reaction evidence="1">
        <text>a quinone + NADH + 5 H(+)(in) = a quinol + NAD(+) + 4 H(+)(out)</text>
        <dbReference type="Rhea" id="RHEA:57888"/>
        <dbReference type="ChEBI" id="CHEBI:15378"/>
        <dbReference type="ChEBI" id="CHEBI:24646"/>
        <dbReference type="ChEBI" id="CHEBI:57540"/>
        <dbReference type="ChEBI" id="CHEBI:57945"/>
        <dbReference type="ChEBI" id="CHEBI:132124"/>
    </reaction>
</comment>
<comment type="subunit">
    <text evidence="1">NDH-1 is composed of 14 different subunits. Subunits NuoB, C, D, E, F, and G constitute the peripheral sector of the complex.</text>
</comment>
<comment type="subcellular location">
    <subcellularLocation>
        <location evidence="1">Cell inner membrane</location>
        <topology evidence="1">Peripheral membrane protein</topology>
        <orientation evidence="1">Cytoplasmic side</orientation>
    </subcellularLocation>
</comment>
<comment type="similarity">
    <text evidence="1">Belongs to the complex I 30 kDa subunit family.</text>
</comment>
<sequence>MSEPLQELGNYIATKRADCVLAWDVTNKELNLDVTPSNIVGLVEFLKTDATCRFSTLIDITAVDYTGRAKRYDVVYHLLSMYQNHRVRLRVSIREDQMMPSVISVHPSANWFEREVFDMFGILFSGHPDLRRILTDYGFRGHPLRKDFPTTGYTEVRYDEAQKRVVYEPVSLVQEYRQFDFMSPWEGAEYILPGDEKKE</sequence>
<feature type="chain" id="PRO_0000358193" description="NADH-quinone oxidoreductase subunit C">
    <location>
        <begin position="1"/>
        <end position="199"/>
    </location>
</feature>
<evidence type="ECO:0000255" key="1">
    <source>
        <dbReference type="HAMAP-Rule" id="MF_01357"/>
    </source>
</evidence>
<dbReference type="EC" id="7.1.1.-" evidence="1"/>
<dbReference type="EMBL" id="CP000362">
    <property type="protein sequence ID" value="ABG32791.1"/>
    <property type="molecule type" value="Genomic_DNA"/>
</dbReference>
<dbReference type="RefSeq" id="WP_011569407.1">
    <property type="nucleotide sequence ID" value="NC_008209.1"/>
</dbReference>
<dbReference type="SMR" id="Q163Q2"/>
<dbReference type="STRING" id="375451.RD1_3290"/>
<dbReference type="KEGG" id="rde:RD1_3290"/>
<dbReference type="eggNOG" id="COG0852">
    <property type="taxonomic scope" value="Bacteria"/>
</dbReference>
<dbReference type="HOGENOM" id="CLU_042628_2_1_5"/>
<dbReference type="OrthoDB" id="9803286at2"/>
<dbReference type="Proteomes" id="UP000007029">
    <property type="component" value="Chromosome"/>
</dbReference>
<dbReference type="GO" id="GO:0005886">
    <property type="term" value="C:plasma membrane"/>
    <property type="evidence" value="ECO:0007669"/>
    <property type="project" value="UniProtKB-SubCell"/>
</dbReference>
<dbReference type="GO" id="GO:0008137">
    <property type="term" value="F:NADH dehydrogenase (ubiquinone) activity"/>
    <property type="evidence" value="ECO:0007669"/>
    <property type="project" value="InterPro"/>
</dbReference>
<dbReference type="GO" id="GO:0050136">
    <property type="term" value="F:NADH:ubiquinone reductase (non-electrogenic) activity"/>
    <property type="evidence" value="ECO:0007669"/>
    <property type="project" value="UniProtKB-UniRule"/>
</dbReference>
<dbReference type="GO" id="GO:0048038">
    <property type="term" value="F:quinone binding"/>
    <property type="evidence" value="ECO:0007669"/>
    <property type="project" value="UniProtKB-KW"/>
</dbReference>
<dbReference type="Gene3D" id="3.30.460.80">
    <property type="entry name" value="NADH:ubiquinone oxidoreductase, 30kDa subunit"/>
    <property type="match status" value="1"/>
</dbReference>
<dbReference type="HAMAP" id="MF_01357">
    <property type="entry name" value="NDH1_NuoC"/>
    <property type="match status" value="1"/>
</dbReference>
<dbReference type="InterPro" id="IPR010218">
    <property type="entry name" value="NADH_DH_suC"/>
</dbReference>
<dbReference type="InterPro" id="IPR037232">
    <property type="entry name" value="NADH_quin_OxRdtase_su_C/D-like"/>
</dbReference>
<dbReference type="InterPro" id="IPR001268">
    <property type="entry name" value="NADH_UbQ_OxRdtase_30kDa_su"/>
</dbReference>
<dbReference type="InterPro" id="IPR020396">
    <property type="entry name" value="NADH_UbQ_OxRdtase_CS"/>
</dbReference>
<dbReference type="NCBIfam" id="TIGR01961">
    <property type="entry name" value="NuoC_fam"/>
    <property type="match status" value="1"/>
</dbReference>
<dbReference type="NCBIfam" id="NF004733">
    <property type="entry name" value="PRK06074.1-5"/>
    <property type="match status" value="1"/>
</dbReference>
<dbReference type="PANTHER" id="PTHR10884:SF14">
    <property type="entry name" value="NADH DEHYDROGENASE [UBIQUINONE] IRON-SULFUR PROTEIN 3, MITOCHONDRIAL"/>
    <property type="match status" value="1"/>
</dbReference>
<dbReference type="PANTHER" id="PTHR10884">
    <property type="entry name" value="NADH DEHYDROGENASE UBIQUINONE IRON-SULFUR PROTEIN 3"/>
    <property type="match status" value="1"/>
</dbReference>
<dbReference type="Pfam" id="PF00329">
    <property type="entry name" value="Complex1_30kDa"/>
    <property type="match status" value="1"/>
</dbReference>
<dbReference type="SUPFAM" id="SSF143243">
    <property type="entry name" value="Nqo5-like"/>
    <property type="match status" value="1"/>
</dbReference>
<dbReference type="PROSITE" id="PS00542">
    <property type="entry name" value="COMPLEX1_30K"/>
    <property type="match status" value="1"/>
</dbReference>
<accession>Q163Q2</accession>
<organism>
    <name type="scientific">Roseobacter denitrificans (strain ATCC 33942 / OCh 114)</name>
    <name type="common">Erythrobacter sp. (strain OCh 114)</name>
    <name type="synonym">Roseobacter denitrificans</name>
    <dbReference type="NCBI Taxonomy" id="375451"/>
    <lineage>
        <taxon>Bacteria</taxon>
        <taxon>Pseudomonadati</taxon>
        <taxon>Pseudomonadota</taxon>
        <taxon>Alphaproteobacteria</taxon>
        <taxon>Rhodobacterales</taxon>
        <taxon>Roseobacteraceae</taxon>
        <taxon>Roseobacter</taxon>
    </lineage>
</organism>
<protein>
    <recommendedName>
        <fullName evidence="1">NADH-quinone oxidoreductase subunit C</fullName>
        <ecNumber evidence="1">7.1.1.-</ecNumber>
    </recommendedName>
    <alternativeName>
        <fullName evidence="1">NADH dehydrogenase I subunit C</fullName>
    </alternativeName>
    <alternativeName>
        <fullName evidence="1">NDH-1 subunit C</fullName>
    </alternativeName>
</protein>